<feature type="chain" id="PRO_0000159210" description="Ferredoxin-like protein">
    <location>
        <begin position="1"/>
        <end position="98"/>
    </location>
</feature>
<evidence type="ECO:0000305" key="1"/>
<name>FIXX_RHILT</name>
<geneLocation type="plasmid">
    <name>sym pRtr843e</name>
</geneLocation>
<keyword id="KW-0249">Electron transport</keyword>
<keyword id="KW-0408">Iron</keyword>
<keyword id="KW-0411">Iron-sulfur</keyword>
<keyword id="KW-0479">Metal-binding</keyword>
<keyword id="KW-0535">Nitrogen fixation</keyword>
<keyword id="KW-0614">Plasmid</keyword>
<keyword id="KW-0813">Transport</keyword>
<organism>
    <name type="scientific">Rhizobium leguminosarum bv. trifolii</name>
    <dbReference type="NCBI Taxonomy" id="386"/>
    <lineage>
        <taxon>Bacteria</taxon>
        <taxon>Pseudomonadati</taxon>
        <taxon>Pseudomonadota</taxon>
        <taxon>Alphaproteobacteria</taxon>
        <taxon>Hyphomicrobiales</taxon>
        <taxon>Rhizobiaceae</taxon>
        <taxon>Rhizobium/Agrobacterium group</taxon>
        <taxon>Rhizobium</taxon>
    </lineage>
</organism>
<gene>
    <name type="primary">fixX</name>
</gene>
<dbReference type="EMBL" id="X05257">
    <property type="protein sequence ID" value="CAA28879.1"/>
    <property type="molecule type" value="Genomic_DNA"/>
</dbReference>
<dbReference type="PIR" id="A27510">
    <property type="entry name" value="A27510"/>
</dbReference>
<dbReference type="SMR" id="P08710"/>
<dbReference type="GO" id="GO:0005506">
    <property type="term" value="F:iron ion binding"/>
    <property type="evidence" value="ECO:0007669"/>
    <property type="project" value="InterPro"/>
</dbReference>
<dbReference type="GO" id="GO:0051536">
    <property type="term" value="F:iron-sulfur cluster binding"/>
    <property type="evidence" value="ECO:0007669"/>
    <property type="project" value="UniProtKB-KW"/>
</dbReference>
<dbReference type="GO" id="GO:0009399">
    <property type="term" value="P:nitrogen fixation"/>
    <property type="evidence" value="ECO:0007669"/>
    <property type="project" value="UniProtKB-KW"/>
</dbReference>
<dbReference type="Gene3D" id="3.30.70.20">
    <property type="match status" value="1"/>
</dbReference>
<dbReference type="InterPro" id="IPR017900">
    <property type="entry name" value="4Fe4S_Fe_S_CS"/>
</dbReference>
<dbReference type="InterPro" id="IPR007859">
    <property type="entry name" value="ETF-QO/FixX_C"/>
</dbReference>
<dbReference type="InterPro" id="IPR012206">
    <property type="entry name" value="Fd_FixX"/>
</dbReference>
<dbReference type="PANTHER" id="PTHR43082">
    <property type="entry name" value="FERREDOXIN-LIKE"/>
    <property type="match status" value="1"/>
</dbReference>
<dbReference type="PANTHER" id="PTHR43082:SF3">
    <property type="entry name" value="FERREDOXIN-LIKE PROTEIN YDIT"/>
    <property type="match status" value="1"/>
</dbReference>
<dbReference type="Pfam" id="PF05187">
    <property type="entry name" value="Fer4_ETF_QO"/>
    <property type="match status" value="1"/>
</dbReference>
<dbReference type="PIRSF" id="PIRSF036548">
    <property type="entry name" value="Fdx_FixX"/>
    <property type="match status" value="1"/>
</dbReference>
<dbReference type="SUPFAM" id="SSF54862">
    <property type="entry name" value="4Fe-4S ferredoxins"/>
    <property type="match status" value="1"/>
</dbReference>
<dbReference type="PROSITE" id="PS00198">
    <property type="entry name" value="4FE4S_FER_1"/>
    <property type="match status" value="1"/>
</dbReference>
<sequence length="98" mass="11110">MKAIVKRRVEDKLYQNRYLVDPGRPHISVRKHLFPTPNLIALTQVCPAKCYQLNDRRQVIIVSDGCLECGTCNVLCGPDGDIEWTYPRGGFGVLFKFG</sequence>
<accession>P08710</accession>
<protein>
    <recommendedName>
        <fullName>Ferredoxin-like protein</fullName>
    </recommendedName>
</protein>
<reference key="1">
    <citation type="journal article" date="1987" name="Nucleic Acids Res.">
        <title>A gene upstream of the Rhizobium trifolii nifA gene encodes a ferredoxin-like protein.</title>
        <authorList>
            <person name="Iismaa S.E."/>
            <person name="Watson J.M."/>
        </authorList>
    </citation>
    <scope>NUCLEOTIDE SEQUENCE [GENOMIC DNA]</scope>
    <source>
        <strain>ANU 843</strain>
    </source>
</reference>
<comment type="function">
    <text>Could be a 3Fe-4S cluster-containing protein.</text>
</comment>
<comment type="similarity">
    <text evidence="1">To ferredoxins from P.putida and C.tartarivorum, ferredoxin I from A.vinelandii, ferredoxin II from D.desulfuricans.</text>
</comment>
<proteinExistence type="predicted"/>